<organism>
    <name type="scientific">Enterobacteria phage T4</name>
    <name type="common">Bacteriophage T4</name>
    <dbReference type="NCBI Taxonomy" id="10665"/>
    <lineage>
        <taxon>Viruses</taxon>
        <taxon>Duplodnaviria</taxon>
        <taxon>Heunggongvirae</taxon>
        <taxon>Uroviricota</taxon>
        <taxon>Caudoviricetes</taxon>
        <taxon>Straboviridae</taxon>
        <taxon>Tevenvirinae</taxon>
        <taxon>Tequatrovirus</taxon>
    </lineage>
</organism>
<dbReference type="EC" id="3.1.26.4"/>
<dbReference type="EMBL" id="X15818">
    <property type="protein sequence ID" value="CAA33812.1"/>
    <property type="molecule type" value="Genomic_DNA"/>
</dbReference>
<dbReference type="EMBL" id="AF158101">
    <property type="protein sequence ID" value="AAD42554.1"/>
    <property type="molecule type" value="Genomic_DNA"/>
</dbReference>
<dbReference type="PIR" id="S05556">
    <property type="entry name" value="S05556"/>
</dbReference>
<dbReference type="RefSeq" id="NP_049859.1">
    <property type="nucleotide sequence ID" value="NC_000866.4"/>
</dbReference>
<dbReference type="PDB" id="1TFR">
    <property type="method" value="X-ray"/>
    <property type="resolution" value="2.06 A"/>
    <property type="chains" value="A=1-305"/>
</dbReference>
<dbReference type="PDB" id="2IHN">
    <property type="method" value="X-ray"/>
    <property type="resolution" value="3.00 A"/>
    <property type="chains" value="A=1-305"/>
</dbReference>
<dbReference type="PDB" id="3H7I">
    <property type="method" value="X-ray"/>
    <property type="resolution" value="1.50 A"/>
    <property type="chains" value="A=1-305"/>
</dbReference>
<dbReference type="PDB" id="3H8J">
    <property type="method" value="X-ray"/>
    <property type="resolution" value="1.80 A"/>
    <property type="chains" value="A=1-305"/>
</dbReference>
<dbReference type="PDB" id="3H8S">
    <property type="method" value="X-ray"/>
    <property type="resolution" value="2.51 A"/>
    <property type="chains" value="A=1-305"/>
</dbReference>
<dbReference type="PDB" id="3H8W">
    <property type="method" value="X-ray"/>
    <property type="resolution" value="2.80 A"/>
    <property type="chains" value="A=1-305"/>
</dbReference>
<dbReference type="PDBsum" id="1TFR"/>
<dbReference type="PDBsum" id="2IHN"/>
<dbReference type="PDBsum" id="3H7I"/>
<dbReference type="PDBsum" id="3H8J"/>
<dbReference type="PDBsum" id="3H8S"/>
<dbReference type="PDBsum" id="3H8W"/>
<dbReference type="SMR" id="P13319"/>
<dbReference type="GeneID" id="1258577"/>
<dbReference type="KEGG" id="vg:1258577"/>
<dbReference type="OrthoDB" id="4856at10239"/>
<dbReference type="BRENDA" id="3.1.13.2">
    <property type="organism ID" value="732"/>
</dbReference>
<dbReference type="BRENDA" id="3.1.99.B1">
    <property type="organism ID" value="732"/>
</dbReference>
<dbReference type="EvolutionaryTrace" id="P13319"/>
<dbReference type="Proteomes" id="UP000009087">
    <property type="component" value="Segment"/>
</dbReference>
<dbReference type="GO" id="GO:0004534">
    <property type="term" value="F:5'-3' RNA exonuclease activity"/>
    <property type="evidence" value="ECO:0000314"/>
    <property type="project" value="CACAO"/>
</dbReference>
<dbReference type="GO" id="GO:0017108">
    <property type="term" value="F:5'-flap endonuclease activity"/>
    <property type="evidence" value="ECO:0007669"/>
    <property type="project" value="InterPro"/>
</dbReference>
<dbReference type="GO" id="GO:0003677">
    <property type="term" value="F:DNA binding"/>
    <property type="evidence" value="ECO:0007669"/>
    <property type="project" value="InterPro"/>
</dbReference>
<dbReference type="GO" id="GO:0004523">
    <property type="term" value="F:RNA-DNA hybrid ribonuclease activity"/>
    <property type="evidence" value="ECO:0000314"/>
    <property type="project" value="CACAO"/>
</dbReference>
<dbReference type="GO" id="GO:0033567">
    <property type="term" value="P:DNA replication, Okazaki fragment processing"/>
    <property type="evidence" value="ECO:0007669"/>
    <property type="project" value="InterPro"/>
</dbReference>
<dbReference type="GO" id="GO:0043137">
    <property type="term" value="P:DNA replication, removal of RNA primer"/>
    <property type="evidence" value="ECO:0000314"/>
    <property type="project" value="CACAO"/>
</dbReference>
<dbReference type="CDD" id="cd09899">
    <property type="entry name" value="H3TH_T4-like"/>
    <property type="match status" value="1"/>
</dbReference>
<dbReference type="CDD" id="cd00008">
    <property type="entry name" value="PIN_53EXO-like"/>
    <property type="match status" value="1"/>
</dbReference>
<dbReference type="Gene3D" id="1.10.150.20">
    <property type="entry name" value="5' to 3' exonuclease, C-terminal subdomain"/>
    <property type="match status" value="1"/>
</dbReference>
<dbReference type="Gene3D" id="3.40.50.1010">
    <property type="entry name" value="5'-nuclease"/>
    <property type="match status" value="1"/>
</dbReference>
<dbReference type="InterPro" id="IPR020046">
    <property type="entry name" value="5-3_exonucl_a-hlix_arch_N"/>
</dbReference>
<dbReference type="InterPro" id="IPR002421">
    <property type="entry name" value="5-3_exonuclease"/>
</dbReference>
<dbReference type="InterPro" id="IPR036279">
    <property type="entry name" value="5-3_exonuclease_C_sf"/>
</dbReference>
<dbReference type="InterPro" id="IPR038969">
    <property type="entry name" value="FEN"/>
</dbReference>
<dbReference type="InterPro" id="IPR008918">
    <property type="entry name" value="HhH2"/>
</dbReference>
<dbReference type="InterPro" id="IPR029060">
    <property type="entry name" value="PIN-like_dom_sf"/>
</dbReference>
<dbReference type="InterPro" id="IPR036276">
    <property type="entry name" value="T4_RNaseH_C"/>
</dbReference>
<dbReference type="PANTHER" id="PTHR42646:SF2">
    <property type="entry name" value="5'-3' EXONUCLEASE FAMILY PROTEIN"/>
    <property type="match status" value="1"/>
</dbReference>
<dbReference type="PANTHER" id="PTHR42646">
    <property type="entry name" value="FLAP ENDONUCLEASE XNI"/>
    <property type="match status" value="1"/>
</dbReference>
<dbReference type="Pfam" id="PF02739">
    <property type="entry name" value="5_3_exonuc_N"/>
    <property type="match status" value="1"/>
</dbReference>
<dbReference type="Pfam" id="PF09293">
    <property type="entry name" value="RNaseH_C"/>
    <property type="match status" value="1"/>
</dbReference>
<dbReference type="SMART" id="SM00475">
    <property type="entry name" value="53EXOc"/>
    <property type="match status" value="1"/>
</dbReference>
<dbReference type="SMART" id="SM00279">
    <property type="entry name" value="HhH2"/>
    <property type="match status" value="1"/>
</dbReference>
<dbReference type="SUPFAM" id="SSF47807">
    <property type="entry name" value="5' to 3' exonuclease, C-terminal subdomain"/>
    <property type="match status" value="1"/>
</dbReference>
<dbReference type="SUPFAM" id="SSF88723">
    <property type="entry name" value="PIN domain-like"/>
    <property type="match status" value="1"/>
</dbReference>
<sequence>MDLEMMLDEDYKEGICLIDFSQIALSTALVNFPDKEKINLSMVRHLILNSIKFNVKKAKTLGYTKIVLCIDNAKSGYWRRDFAYYYKKNRGKAREESTWDWEGYFESSHKVIDELKAYMPYIVMDIDKYEADDHIAVLVKKFSLEGHKILIISSDGDFTQLHKYPNVKQWSPMHKKWVKIKSGSAEIDCMTKILKGDKKDNVASVKVRSDFWFTRVEGERTPSMKTSIVEAIANDREQAKVLLTESEYNRYKENLVLIDFDYIPDNIASNIVNYYNSYKLPPRGKIYSYFVKAGLSKLTNSINEF</sequence>
<gene>
    <name type="primary">rnh</name>
    <name type="synonym">33.2</name>
    <name type="synonym">das</name>
</gene>
<evidence type="ECO:0000269" key="1">
    <source>
    </source>
</evidence>
<evidence type="ECO:0000269" key="2">
    <source>
    </source>
</evidence>
<evidence type="ECO:0007829" key="3">
    <source>
        <dbReference type="PDB" id="3H7I"/>
    </source>
</evidence>
<protein>
    <recommendedName>
        <fullName>Ribonuclease H</fullName>
        <shortName>RNase H</shortName>
        <ecNumber>3.1.26.4</ecNumber>
    </recommendedName>
</protein>
<comment type="function">
    <text evidence="1 2">Plays essential roles in DNA replication by removing the RNA primers from lagging strand fragments. Exhibits 5'to 3' exonuclease activity on either RNA/DNA or DNA/DNA duplexes and endonuclease activity on either flap or fork DNA structures.</text>
</comment>
<comment type="catalytic activity">
    <reaction>
        <text>Endonucleolytic cleavage to 5'-phosphomonoester.</text>
        <dbReference type="EC" id="3.1.26.4"/>
    </reaction>
</comment>
<feature type="chain" id="PRO_0000164977" description="Ribonuclease H">
    <location>
        <begin position="1"/>
        <end position="305"/>
    </location>
</feature>
<feature type="helix" evidence="3">
    <location>
        <begin position="6"/>
        <end position="8"/>
    </location>
</feature>
<feature type="strand" evidence="3">
    <location>
        <begin position="15"/>
        <end position="19"/>
    </location>
</feature>
<feature type="helix" evidence="3">
    <location>
        <begin position="20"/>
        <end position="31"/>
    </location>
</feature>
<feature type="strand" evidence="3">
    <location>
        <begin position="34"/>
        <end position="36"/>
    </location>
</feature>
<feature type="helix" evidence="3">
    <location>
        <begin position="40"/>
        <end position="60"/>
    </location>
</feature>
<feature type="strand" evidence="3">
    <location>
        <begin position="65"/>
        <end position="69"/>
    </location>
</feature>
<feature type="helix" evidence="3">
    <location>
        <begin position="78"/>
        <end position="82"/>
    </location>
</feature>
<feature type="turn" evidence="3">
    <location>
        <begin position="84"/>
        <end position="87"/>
    </location>
</feature>
<feature type="helix" evidence="3">
    <location>
        <begin position="88"/>
        <end position="96"/>
    </location>
</feature>
<feature type="helix" evidence="3">
    <location>
        <begin position="101"/>
        <end position="118"/>
    </location>
</feature>
<feature type="strand" evidence="3">
    <location>
        <begin position="119"/>
        <end position="124"/>
    </location>
</feature>
<feature type="helix" evidence="3">
    <location>
        <begin position="131"/>
        <end position="144"/>
    </location>
</feature>
<feature type="strand" evidence="3">
    <location>
        <begin position="149"/>
        <end position="152"/>
    </location>
</feature>
<feature type="helix" evidence="3">
    <location>
        <begin position="159"/>
        <end position="163"/>
    </location>
</feature>
<feature type="strand" evidence="3">
    <location>
        <begin position="164"/>
        <end position="171"/>
    </location>
</feature>
<feature type="turn" evidence="3">
    <location>
        <begin position="172"/>
        <end position="175"/>
    </location>
</feature>
<feature type="strand" evidence="3">
    <location>
        <begin position="176"/>
        <end position="178"/>
    </location>
</feature>
<feature type="helix" evidence="3">
    <location>
        <begin position="185"/>
        <end position="195"/>
    </location>
</feature>
<feature type="helix" evidence="3">
    <location>
        <begin position="198"/>
        <end position="200"/>
    </location>
</feature>
<feature type="helix" evidence="3">
    <location>
        <begin position="211"/>
        <end position="214"/>
    </location>
</feature>
<feature type="helix" evidence="3">
    <location>
        <begin position="226"/>
        <end position="234"/>
    </location>
</feature>
<feature type="helix" evidence="3">
    <location>
        <begin position="236"/>
        <end position="238"/>
    </location>
</feature>
<feature type="helix" evidence="3">
    <location>
        <begin position="239"/>
        <end position="242"/>
    </location>
</feature>
<feature type="helix" evidence="3">
    <location>
        <begin position="245"/>
        <end position="258"/>
    </location>
</feature>
<feature type="helix" evidence="3">
    <location>
        <begin position="260"/>
        <end position="262"/>
    </location>
</feature>
<feature type="helix" evidence="3">
    <location>
        <begin position="265"/>
        <end position="276"/>
    </location>
</feature>
<feature type="helix" evidence="3">
    <location>
        <begin position="285"/>
        <end position="292"/>
    </location>
</feature>
<feature type="helix" evidence="3">
    <location>
        <begin position="298"/>
        <end position="304"/>
    </location>
</feature>
<accession>P13319</accession>
<name>RNH_BPT4</name>
<keyword id="KW-0002">3D-structure</keyword>
<keyword id="KW-0903">Direct protein sequencing</keyword>
<keyword id="KW-0235">DNA replication</keyword>
<keyword id="KW-0255">Endonuclease</keyword>
<keyword id="KW-0269">Exonuclease</keyword>
<keyword id="KW-0378">Hydrolase</keyword>
<keyword id="KW-0540">Nuclease</keyword>
<keyword id="KW-1185">Reference proteome</keyword>
<organismHost>
    <name type="scientific">Escherichia coli</name>
    <dbReference type="NCBI Taxonomy" id="562"/>
</organismHost>
<proteinExistence type="evidence at protein level"/>
<reference key="1">
    <citation type="journal article" date="1989" name="Nucleic Acids Res.">
        <title>Organization of the bacteriophage T4 genome between map positions 150.745 and 145.824.</title>
        <authorList>
            <person name="Hahn S."/>
            <person name="Rueger W."/>
        </authorList>
    </citation>
    <scope>NUCLEOTIDE SEQUENCE [GENOMIC DNA]</scope>
    <source>
        <strain>BK536</strain>
    </source>
</reference>
<reference key="2">
    <citation type="journal article" date="2003" name="Microbiol. Mol. Biol. Rev.">
        <title>Bacteriophage T4 genome.</title>
        <authorList>
            <person name="Miller E.S."/>
            <person name="Kutter E."/>
            <person name="Mosig G."/>
            <person name="Arisaka F."/>
            <person name="Kunisawa T."/>
            <person name="Ruger W."/>
        </authorList>
    </citation>
    <scope>NUCLEOTIDE SEQUENCE [LARGE SCALE GENOMIC DNA]</scope>
</reference>
<reference key="3">
    <citation type="journal article" date="1991" name="J. Biol. Chem.">
        <title>Bacteriophage T4 encodes an RNase H which removes RNA primers made by the T4 DNA replication system in vitro.</title>
        <authorList>
            <person name="Hollingsworth H.C."/>
            <person name="Nossal N.G."/>
        </authorList>
    </citation>
    <scope>FUNCTION</scope>
    <scope>PROTEIN SEQUENCE OF 1-9</scope>
</reference>
<reference key="4">
    <citation type="journal article" date="2001" name="J. Biol. Chem.">
        <title>Bacteriophage T4 RNase H removes both RNA primers and adjacent DNA from the 5' end of lagging strand fragments.</title>
        <authorList>
            <person name="Bhagwat M."/>
            <person name="Nossal N.G."/>
        </authorList>
    </citation>
    <scope>FUNCTION</scope>
</reference>
<reference key="5">
    <citation type="journal article" date="1996" name="Cell">
        <title>Structure of bacteriophage T4 RNase H, a 5' to 3' RNA-DNA and DNA-DNA exonuclease with sequence similarity to the RAD2 family of eukaryotic proteins.</title>
        <authorList>
            <person name="Mueser T.C."/>
            <person name="Nossal N.G."/>
            <person name="Hyde C.C."/>
        </authorList>
    </citation>
    <scope>X-RAY CRYSTALLOGRAPHY (2.06 ANGSTROMS)</scope>
</reference>